<name>EF1B_METM6</name>
<comment type="function">
    <text evidence="1">Promotes the exchange of GDP for GTP in EF-1-alpha/GDP, thus allowing the regeneration of EF-1-alpha/GTP that could then be used to form the ternary complex EF-1-alpha/GTP/AAtRNA.</text>
</comment>
<comment type="similarity">
    <text evidence="1">Belongs to the EF-1-beta/EF-1-delta family.</text>
</comment>
<dbReference type="EMBL" id="CP000867">
    <property type="protein sequence ID" value="ABX02085.1"/>
    <property type="molecule type" value="Genomic_DNA"/>
</dbReference>
<dbReference type="SMR" id="A9A9R2"/>
<dbReference type="STRING" id="444158.MmarC6_1272"/>
<dbReference type="KEGG" id="mmx:MmarC6_1272"/>
<dbReference type="eggNOG" id="arCOG01988">
    <property type="taxonomic scope" value="Archaea"/>
</dbReference>
<dbReference type="HOGENOM" id="CLU_165896_0_0_2"/>
<dbReference type="GO" id="GO:0003746">
    <property type="term" value="F:translation elongation factor activity"/>
    <property type="evidence" value="ECO:0007669"/>
    <property type="project" value="UniProtKB-UniRule"/>
</dbReference>
<dbReference type="Gene3D" id="3.30.70.60">
    <property type="match status" value="1"/>
</dbReference>
<dbReference type="HAMAP" id="MF_00043">
    <property type="entry name" value="EF1_beta"/>
    <property type="match status" value="1"/>
</dbReference>
<dbReference type="InterPro" id="IPR036219">
    <property type="entry name" value="eEF-1beta-like_sf"/>
</dbReference>
<dbReference type="InterPro" id="IPR014038">
    <property type="entry name" value="EF1B_bsu/dsu_GNE"/>
</dbReference>
<dbReference type="InterPro" id="IPR014717">
    <property type="entry name" value="Transl_elong_EF1B/ribsomal_bS6"/>
</dbReference>
<dbReference type="InterPro" id="IPR004542">
    <property type="entry name" value="Transl_elong_EF1B_B_arc"/>
</dbReference>
<dbReference type="NCBIfam" id="TIGR00489">
    <property type="entry name" value="aEF-1_beta"/>
    <property type="match status" value="1"/>
</dbReference>
<dbReference type="NCBIfam" id="NF001670">
    <property type="entry name" value="PRK00435.1"/>
    <property type="match status" value="1"/>
</dbReference>
<dbReference type="PANTHER" id="PTHR39647">
    <property type="entry name" value="ELONGATION FACTOR 1-BETA"/>
    <property type="match status" value="1"/>
</dbReference>
<dbReference type="PANTHER" id="PTHR39647:SF1">
    <property type="entry name" value="ELONGATION FACTOR 1-BETA"/>
    <property type="match status" value="1"/>
</dbReference>
<dbReference type="Pfam" id="PF00736">
    <property type="entry name" value="EF1_GNE"/>
    <property type="match status" value="1"/>
</dbReference>
<dbReference type="PIRSF" id="PIRSF006521">
    <property type="entry name" value="Transl_elong_EF1B_B_arc"/>
    <property type="match status" value="1"/>
</dbReference>
<dbReference type="SMART" id="SM00888">
    <property type="entry name" value="EF1_GNE"/>
    <property type="match status" value="1"/>
</dbReference>
<dbReference type="SUPFAM" id="SSF54984">
    <property type="entry name" value="eEF-1beta-like"/>
    <property type="match status" value="1"/>
</dbReference>
<keyword id="KW-0251">Elongation factor</keyword>
<keyword id="KW-0648">Protein biosynthesis</keyword>
<feature type="chain" id="PRO_0000366428" description="Elongation factor 1-beta">
    <location>
        <begin position="1"/>
        <end position="89"/>
    </location>
</feature>
<evidence type="ECO:0000255" key="1">
    <source>
        <dbReference type="HAMAP-Rule" id="MF_00043"/>
    </source>
</evidence>
<organism>
    <name type="scientific">Methanococcus maripaludis (strain C6 / ATCC BAA-1332)</name>
    <dbReference type="NCBI Taxonomy" id="444158"/>
    <lineage>
        <taxon>Archaea</taxon>
        <taxon>Methanobacteriati</taxon>
        <taxon>Methanobacteriota</taxon>
        <taxon>Methanomada group</taxon>
        <taxon>Methanococci</taxon>
        <taxon>Methanococcales</taxon>
        <taxon>Methanococcaceae</taxon>
        <taxon>Methanococcus</taxon>
    </lineage>
</organism>
<reference key="1">
    <citation type="submission" date="2007-10" db="EMBL/GenBank/DDBJ databases">
        <title>Complete sequence of Methanococcus maripaludis C6.</title>
        <authorList>
            <consortium name="US DOE Joint Genome Institute"/>
            <person name="Copeland A."/>
            <person name="Lucas S."/>
            <person name="Lapidus A."/>
            <person name="Barry K."/>
            <person name="Glavina del Rio T."/>
            <person name="Dalin E."/>
            <person name="Tice H."/>
            <person name="Pitluck S."/>
            <person name="Clum A."/>
            <person name="Schmutz J."/>
            <person name="Larimer F."/>
            <person name="Land M."/>
            <person name="Hauser L."/>
            <person name="Kyrpides N."/>
            <person name="Mikhailova N."/>
            <person name="Sieprawska-Lupa M."/>
            <person name="Whitman W.B."/>
            <person name="Richardson P."/>
        </authorList>
    </citation>
    <scope>NUCLEOTIDE SEQUENCE [LARGE SCALE GENOMIC DNA]</scope>
    <source>
        <strain>C6 / ATCC BAA-1332</strain>
    </source>
</reference>
<protein>
    <recommendedName>
        <fullName evidence="1">Elongation factor 1-beta</fullName>
        <shortName evidence="1">EF-1-beta</shortName>
    </recommendedName>
    <alternativeName>
        <fullName evidence="1">aEF-1beta</fullName>
    </alternativeName>
</protein>
<accession>A9A9R2</accession>
<proteinExistence type="inferred from homology"/>
<gene>
    <name evidence="1" type="primary">ef1b</name>
    <name type="ordered locus">MmarC6_1272</name>
</gene>
<sequence>MATVIAKVKVMPTSPEVEKEALKETLKELVEKNDAKCRGVSDEPLAFGLYTVFVMVEMEEKEGGMDPIEEAMNALENVESAEVVELSLV</sequence>